<accession>Q6UWI4</accession>
<accession>B9EH70</accession>
<accession>Q5W0G8</accession>
<gene>
    <name type="primary">SHISA2</name>
    <name type="synonym">C13orf13</name>
    <name type="synonym">TMEM46</name>
    <name type="ORF">UNQ9166/PRO28631</name>
</gene>
<comment type="function">
    <text evidence="1">Plays an essential role in the maturation of presomitic mesoderm cells by individual attenuation of both FGF and WNT signaling.</text>
</comment>
<comment type="interaction">
    <interactant intactId="EBI-11343474">
        <id>Q6UWI4</id>
    </interactant>
    <interactant intactId="EBI-8624731">
        <id>P0C7T5</id>
        <label>ATXN1L</label>
    </interactant>
    <organismsDiffer>false</organismsDiffer>
    <experiments>3</experiments>
</comment>
<comment type="subcellular location">
    <subcellularLocation>
        <location evidence="1">Endoplasmic reticulum membrane</location>
        <topology evidence="1">Single-pass type I membrane protein</topology>
    </subcellularLocation>
</comment>
<comment type="similarity">
    <text evidence="5">Belongs to the shisa family.</text>
</comment>
<organism>
    <name type="scientific">Homo sapiens</name>
    <name type="common">Human</name>
    <dbReference type="NCBI Taxonomy" id="9606"/>
    <lineage>
        <taxon>Eukaryota</taxon>
        <taxon>Metazoa</taxon>
        <taxon>Chordata</taxon>
        <taxon>Craniata</taxon>
        <taxon>Vertebrata</taxon>
        <taxon>Euteleostomi</taxon>
        <taxon>Mammalia</taxon>
        <taxon>Eutheria</taxon>
        <taxon>Euarchontoglires</taxon>
        <taxon>Primates</taxon>
        <taxon>Haplorrhini</taxon>
        <taxon>Catarrhini</taxon>
        <taxon>Hominidae</taxon>
        <taxon>Homo</taxon>
    </lineage>
</organism>
<dbReference type="EMBL" id="AY358775">
    <property type="protein sequence ID" value="AAQ89135.1"/>
    <property type="molecule type" value="mRNA"/>
</dbReference>
<dbReference type="EMBL" id="AL139004">
    <property type="status" value="NOT_ANNOTATED_CDS"/>
    <property type="molecule type" value="Genomic_DNA"/>
</dbReference>
<dbReference type="EMBL" id="CH471075">
    <property type="protein sequence ID" value="EAX08378.1"/>
    <property type="molecule type" value="Genomic_DNA"/>
</dbReference>
<dbReference type="EMBL" id="BC132898">
    <property type="protein sequence ID" value="AAI32899.1"/>
    <property type="molecule type" value="mRNA"/>
</dbReference>
<dbReference type="EMBL" id="BC137092">
    <property type="protein sequence ID" value="AAI37093.1"/>
    <property type="molecule type" value="mRNA"/>
</dbReference>
<dbReference type="CCDS" id="CCDS31951.1"/>
<dbReference type="RefSeq" id="NP_001007539.1">
    <property type="nucleotide sequence ID" value="NM_001007538.2"/>
</dbReference>
<dbReference type="SMR" id="Q6UWI4"/>
<dbReference type="BioGRID" id="132503">
    <property type="interactions" value="19"/>
</dbReference>
<dbReference type="FunCoup" id="Q6UWI4">
    <property type="interactions" value="401"/>
</dbReference>
<dbReference type="IntAct" id="Q6UWI4">
    <property type="interactions" value="11"/>
</dbReference>
<dbReference type="MINT" id="Q6UWI4"/>
<dbReference type="STRING" id="9606.ENSP00000313079"/>
<dbReference type="GlyGen" id="Q6UWI4">
    <property type="glycosylation" value="1 site"/>
</dbReference>
<dbReference type="iPTMnet" id="Q6UWI4"/>
<dbReference type="PhosphoSitePlus" id="Q6UWI4"/>
<dbReference type="SwissPalm" id="Q6UWI4"/>
<dbReference type="BioMuta" id="SHISA2"/>
<dbReference type="DMDM" id="55583902"/>
<dbReference type="jPOST" id="Q6UWI4"/>
<dbReference type="MassIVE" id="Q6UWI4"/>
<dbReference type="PaxDb" id="9606-ENSP00000313079"/>
<dbReference type="PeptideAtlas" id="Q6UWI4"/>
<dbReference type="ProteomicsDB" id="67483"/>
<dbReference type="Pumba" id="Q6UWI4"/>
<dbReference type="Antibodypedia" id="53427">
    <property type="antibodies" value="57 antibodies from 10 providers"/>
</dbReference>
<dbReference type="DNASU" id="387914"/>
<dbReference type="Ensembl" id="ENST00000319420.4">
    <property type="protein sequence ID" value="ENSP00000313079.3"/>
    <property type="gene ID" value="ENSG00000180730.5"/>
</dbReference>
<dbReference type="GeneID" id="387914"/>
<dbReference type="KEGG" id="hsa:387914"/>
<dbReference type="MANE-Select" id="ENST00000319420.4">
    <property type="protein sequence ID" value="ENSP00000313079.3"/>
    <property type="RefSeq nucleotide sequence ID" value="NM_001007538.2"/>
    <property type="RefSeq protein sequence ID" value="NP_001007539.1"/>
</dbReference>
<dbReference type="UCSC" id="uc001uqm.2">
    <property type="organism name" value="human"/>
</dbReference>
<dbReference type="AGR" id="HGNC:20366"/>
<dbReference type="CTD" id="387914"/>
<dbReference type="DisGeNET" id="387914"/>
<dbReference type="GeneCards" id="SHISA2"/>
<dbReference type="HGNC" id="HGNC:20366">
    <property type="gene designation" value="SHISA2"/>
</dbReference>
<dbReference type="HPA" id="ENSG00000180730">
    <property type="expression patterns" value="Tissue enhanced (breast, skeletal muscle, thyroid gland)"/>
</dbReference>
<dbReference type="MIM" id="617324">
    <property type="type" value="gene"/>
</dbReference>
<dbReference type="neXtProt" id="NX_Q6UWI4"/>
<dbReference type="OpenTargets" id="ENSG00000180730"/>
<dbReference type="PharmGKB" id="PA162403292"/>
<dbReference type="VEuPathDB" id="HostDB:ENSG00000180730"/>
<dbReference type="eggNOG" id="ENOG502QWT7">
    <property type="taxonomic scope" value="Eukaryota"/>
</dbReference>
<dbReference type="GeneTree" id="ENSGT00940000157443"/>
<dbReference type="HOGENOM" id="CLU_085916_0_0_1"/>
<dbReference type="InParanoid" id="Q6UWI4"/>
<dbReference type="OMA" id="YAHPVSP"/>
<dbReference type="OrthoDB" id="10025410at2759"/>
<dbReference type="PAN-GO" id="Q6UWI4">
    <property type="GO annotations" value="3 GO annotations based on evolutionary models"/>
</dbReference>
<dbReference type="PhylomeDB" id="Q6UWI4"/>
<dbReference type="TreeFam" id="TF330800"/>
<dbReference type="PathwayCommons" id="Q6UWI4"/>
<dbReference type="SignaLink" id="Q6UWI4"/>
<dbReference type="BioGRID-ORCS" id="387914">
    <property type="hits" value="9 hits in 1146 CRISPR screens"/>
</dbReference>
<dbReference type="GenomeRNAi" id="387914"/>
<dbReference type="Pharos" id="Q6UWI4">
    <property type="development level" value="Tbio"/>
</dbReference>
<dbReference type="PRO" id="PR:Q6UWI4"/>
<dbReference type="Proteomes" id="UP000005640">
    <property type="component" value="Chromosome 13"/>
</dbReference>
<dbReference type="RNAct" id="Q6UWI4">
    <property type="molecule type" value="protein"/>
</dbReference>
<dbReference type="Bgee" id="ENSG00000180730">
    <property type="expression patterns" value="Expressed in ventricular zone and 125 other cell types or tissues"/>
</dbReference>
<dbReference type="GO" id="GO:0005783">
    <property type="term" value="C:endoplasmic reticulum"/>
    <property type="evidence" value="ECO:0000318"/>
    <property type="project" value="GO_Central"/>
</dbReference>
<dbReference type="GO" id="GO:0005789">
    <property type="term" value="C:endoplasmic reticulum membrane"/>
    <property type="evidence" value="ECO:0007669"/>
    <property type="project" value="UniProtKB-SubCell"/>
</dbReference>
<dbReference type="GO" id="GO:0040037">
    <property type="term" value="P:negative regulation of fibroblast growth factor receptor signaling pathway"/>
    <property type="evidence" value="ECO:0000318"/>
    <property type="project" value="GO_Central"/>
</dbReference>
<dbReference type="GO" id="GO:0030178">
    <property type="term" value="P:negative regulation of Wnt signaling pathway"/>
    <property type="evidence" value="ECO:0000318"/>
    <property type="project" value="GO_Central"/>
</dbReference>
<dbReference type="InterPro" id="IPR026910">
    <property type="entry name" value="Shisa"/>
</dbReference>
<dbReference type="InterPro" id="IPR053891">
    <property type="entry name" value="Shisa_N"/>
</dbReference>
<dbReference type="PANTHER" id="PTHR31395:SF0">
    <property type="entry name" value="PROTEIN SHISA-2 HOMOLOG"/>
    <property type="match status" value="1"/>
</dbReference>
<dbReference type="PANTHER" id="PTHR31395">
    <property type="entry name" value="SHISA"/>
    <property type="match status" value="1"/>
</dbReference>
<dbReference type="Pfam" id="PF13908">
    <property type="entry name" value="Shisa_N"/>
    <property type="match status" value="1"/>
</dbReference>
<reference key="1">
    <citation type="journal article" date="2003" name="Genome Res.">
        <title>The secreted protein discovery initiative (SPDI), a large-scale effort to identify novel human secreted and transmembrane proteins: a bioinformatics assessment.</title>
        <authorList>
            <person name="Clark H.F."/>
            <person name="Gurney A.L."/>
            <person name="Abaya E."/>
            <person name="Baker K."/>
            <person name="Baldwin D.T."/>
            <person name="Brush J."/>
            <person name="Chen J."/>
            <person name="Chow B."/>
            <person name="Chui C."/>
            <person name="Crowley C."/>
            <person name="Currell B."/>
            <person name="Deuel B."/>
            <person name="Dowd P."/>
            <person name="Eaton D."/>
            <person name="Foster J.S."/>
            <person name="Grimaldi C."/>
            <person name="Gu Q."/>
            <person name="Hass P.E."/>
            <person name="Heldens S."/>
            <person name="Huang A."/>
            <person name="Kim H.S."/>
            <person name="Klimowski L."/>
            <person name="Jin Y."/>
            <person name="Johnson S."/>
            <person name="Lee J."/>
            <person name="Lewis L."/>
            <person name="Liao D."/>
            <person name="Mark M.R."/>
            <person name="Robbie E."/>
            <person name="Sanchez C."/>
            <person name="Schoenfeld J."/>
            <person name="Seshagiri S."/>
            <person name="Simmons L."/>
            <person name="Singh J."/>
            <person name="Smith V."/>
            <person name="Stinson J."/>
            <person name="Vagts A."/>
            <person name="Vandlen R.L."/>
            <person name="Watanabe C."/>
            <person name="Wieand D."/>
            <person name="Woods K."/>
            <person name="Xie M.-H."/>
            <person name="Yansura D.G."/>
            <person name="Yi S."/>
            <person name="Yu G."/>
            <person name="Yuan J."/>
            <person name="Zhang M."/>
            <person name="Zhang Z."/>
            <person name="Goddard A.D."/>
            <person name="Wood W.I."/>
            <person name="Godowski P.J."/>
            <person name="Gray A.M."/>
        </authorList>
    </citation>
    <scope>NUCLEOTIDE SEQUENCE [LARGE SCALE MRNA]</scope>
</reference>
<reference key="2">
    <citation type="journal article" date="2004" name="Nature">
        <title>The DNA sequence and analysis of human chromosome 13.</title>
        <authorList>
            <person name="Dunham A."/>
            <person name="Matthews L.H."/>
            <person name="Burton J."/>
            <person name="Ashurst J.L."/>
            <person name="Howe K.L."/>
            <person name="Ashcroft K.J."/>
            <person name="Beare D.M."/>
            <person name="Burford D.C."/>
            <person name="Hunt S.E."/>
            <person name="Griffiths-Jones S."/>
            <person name="Jones M.C."/>
            <person name="Keenan S.J."/>
            <person name="Oliver K."/>
            <person name="Scott C.E."/>
            <person name="Ainscough R."/>
            <person name="Almeida J.P."/>
            <person name="Ambrose K.D."/>
            <person name="Andrews D.T."/>
            <person name="Ashwell R.I.S."/>
            <person name="Babbage A.K."/>
            <person name="Bagguley C.L."/>
            <person name="Bailey J."/>
            <person name="Bannerjee R."/>
            <person name="Barlow K.F."/>
            <person name="Bates K."/>
            <person name="Beasley H."/>
            <person name="Bird C.P."/>
            <person name="Bray-Allen S."/>
            <person name="Brown A.J."/>
            <person name="Brown J.Y."/>
            <person name="Burrill W."/>
            <person name="Carder C."/>
            <person name="Carter N.P."/>
            <person name="Chapman J.C."/>
            <person name="Clamp M.E."/>
            <person name="Clark S.Y."/>
            <person name="Clarke G."/>
            <person name="Clee C.M."/>
            <person name="Clegg S.C."/>
            <person name="Cobley V."/>
            <person name="Collins J.E."/>
            <person name="Corby N."/>
            <person name="Coville G.J."/>
            <person name="Deloukas P."/>
            <person name="Dhami P."/>
            <person name="Dunham I."/>
            <person name="Dunn M."/>
            <person name="Earthrowl M.E."/>
            <person name="Ellington A.G."/>
            <person name="Faulkner L."/>
            <person name="Frankish A.G."/>
            <person name="Frankland J."/>
            <person name="French L."/>
            <person name="Garner P."/>
            <person name="Garnett J."/>
            <person name="Gilbert J.G.R."/>
            <person name="Gilson C.J."/>
            <person name="Ghori J."/>
            <person name="Grafham D.V."/>
            <person name="Gribble S.M."/>
            <person name="Griffiths C."/>
            <person name="Hall R.E."/>
            <person name="Hammond S."/>
            <person name="Harley J.L."/>
            <person name="Hart E.A."/>
            <person name="Heath P.D."/>
            <person name="Howden P.J."/>
            <person name="Huckle E.J."/>
            <person name="Hunt P.J."/>
            <person name="Hunt A.R."/>
            <person name="Johnson C."/>
            <person name="Johnson D."/>
            <person name="Kay M."/>
            <person name="Kimberley A.M."/>
            <person name="King A."/>
            <person name="Laird G.K."/>
            <person name="Langford C.J."/>
            <person name="Lawlor S."/>
            <person name="Leongamornlert D.A."/>
            <person name="Lloyd D.M."/>
            <person name="Lloyd C."/>
            <person name="Loveland J.E."/>
            <person name="Lovell J."/>
            <person name="Martin S."/>
            <person name="Mashreghi-Mohammadi M."/>
            <person name="McLaren S.J."/>
            <person name="McMurray A."/>
            <person name="Milne S."/>
            <person name="Moore M.J.F."/>
            <person name="Nickerson T."/>
            <person name="Palmer S.A."/>
            <person name="Pearce A.V."/>
            <person name="Peck A.I."/>
            <person name="Pelan S."/>
            <person name="Phillimore B."/>
            <person name="Porter K.M."/>
            <person name="Rice C.M."/>
            <person name="Searle S."/>
            <person name="Sehra H.K."/>
            <person name="Shownkeen R."/>
            <person name="Skuce C.D."/>
            <person name="Smith M."/>
            <person name="Steward C.A."/>
            <person name="Sycamore N."/>
            <person name="Tester J."/>
            <person name="Thomas D.W."/>
            <person name="Tracey A."/>
            <person name="Tromans A."/>
            <person name="Tubby B."/>
            <person name="Wall M."/>
            <person name="Wallis J.M."/>
            <person name="West A.P."/>
            <person name="Whitehead S.L."/>
            <person name="Willey D.L."/>
            <person name="Wilming L."/>
            <person name="Wray P.W."/>
            <person name="Wright M.W."/>
            <person name="Young L."/>
            <person name="Coulson A."/>
            <person name="Durbin R.M."/>
            <person name="Hubbard T."/>
            <person name="Sulston J.E."/>
            <person name="Beck S."/>
            <person name="Bentley D.R."/>
            <person name="Rogers J."/>
            <person name="Ross M.T."/>
        </authorList>
    </citation>
    <scope>NUCLEOTIDE SEQUENCE [LARGE SCALE GENOMIC DNA]</scope>
</reference>
<reference key="3">
    <citation type="submission" date="2005-07" db="EMBL/GenBank/DDBJ databases">
        <authorList>
            <person name="Mural R.J."/>
            <person name="Istrail S."/>
            <person name="Sutton G.G."/>
            <person name="Florea L."/>
            <person name="Halpern A.L."/>
            <person name="Mobarry C.M."/>
            <person name="Lippert R."/>
            <person name="Walenz B."/>
            <person name="Shatkay H."/>
            <person name="Dew I."/>
            <person name="Miller J.R."/>
            <person name="Flanigan M.J."/>
            <person name="Edwards N.J."/>
            <person name="Bolanos R."/>
            <person name="Fasulo D."/>
            <person name="Halldorsson B.V."/>
            <person name="Hannenhalli S."/>
            <person name="Turner R."/>
            <person name="Yooseph S."/>
            <person name="Lu F."/>
            <person name="Nusskern D.R."/>
            <person name="Shue B.C."/>
            <person name="Zheng X.H."/>
            <person name="Zhong F."/>
            <person name="Delcher A.L."/>
            <person name="Huson D.H."/>
            <person name="Kravitz S.A."/>
            <person name="Mouchard L."/>
            <person name="Reinert K."/>
            <person name="Remington K.A."/>
            <person name="Clark A.G."/>
            <person name="Waterman M.S."/>
            <person name="Eichler E.E."/>
            <person name="Adams M.D."/>
            <person name="Hunkapiller M.W."/>
            <person name="Myers E.W."/>
            <person name="Venter J.C."/>
        </authorList>
    </citation>
    <scope>NUCLEOTIDE SEQUENCE [LARGE SCALE GENOMIC DNA]</scope>
</reference>
<reference key="4">
    <citation type="journal article" date="2004" name="Genome Res.">
        <title>The status, quality, and expansion of the NIH full-length cDNA project: the Mammalian Gene Collection (MGC).</title>
        <authorList>
            <consortium name="The MGC Project Team"/>
        </authorList>
    </citation>
    <scope>NUCLEOTIDE SEQUENCE [LARGE SCALE MRNA]</scope>
    <source>
        <tissue>Lung</tissue>
        <tissue>Testis</tissue>
    </source>
</reference>
<reference key="5">
    <citation type="journal article" date="2004" name="Protein Sci.">
        <title>Signal peptide prediction based on analysis of experimentally verified cleavage sites.</title>
        <authorList>
            <person name="Zhang Z."/>
            <person name="Henzel W.J."/>
        </authorList>
    </citation>
    <scope>PROTEIN SEQUENCE OF 34-47</scope>
</reference>
<keyword id="KW-0217">Developmental protein</keyword>
<keyword id="KW-0903">Direct protein sequencing</keyword>
<keyword id="KW-0256">Endoplasmic reticulum</keyword>
<keyword id="KW-0472">Membrane</keyword>
<keyword id="KW-1267">Proteomics identification</keyword>
<keyword id="KW-1185">Reference proteome</keyword>
<keyword id="KW-0732">Signal</keyword>
<keyword id="KW-0812">Transmembrane</keyword>
<keyword id="KW-1133">Transmembrane helix</keyword>
<feature type="signal peptide" evidence="4">
    <location>
        <begin position="1"/>
        <end position="33"/>
    </location>
</feature>
<feature type="chain" id="PRO_0000022615" description="Protein shisa-2 homolog">
    <location>
        <begin position="34"/>
        <end position="295"/>
    </location>
</feature>
<feature type="topological domain" description="Extracellular" evidence="2">
    <location>
        <begin position="34"/>
        <end position="110"/>
    </location>
</feature>
<feature type="transmembrane region" description="Helical" evidence="2">
    <location>
        <begin position="111"/>
        <end position="131"/>
    </location>
</feature>
<feature type="topological domain" description="Cytoplasmic" evidence="2">
    <location>
        <begin position="132"/>
        <end position="295"/>
    </location>
</feature>
<feature type="region of interest" description="Disordered" evidence="3">
    <location>
        <begin position="87"/>
        <end position="108"/>
    </location>
</feature>
<feature type="region of interest" description="Disordered" evidence="3">
    <location>
        <begin position="168"/>
        <end position="205"/>
    </location>
</feature>
<feature type="compositionally biased region" description="Low complexity" evidence="3">
    <location>
        <begin position="169"/>
        <end position="197"/>
    </location>
</feature>
<sequence>MWGARRSSVSSSWNAASLLQLLLAALLAAGARASGEYCHGWLDAQGVWRIGFQCPERFDGGDATICCGSCALRYCCSSAEARLDQGGCDNDRQQGAGEPGRADKDGPDGSAVPIYVPFLIVGSVFVAFIILGSLVAACCCRCLRPKQDPQQSRAPGGNRLMETIPMIPSASTSRGSSSRQSSTAASSSSSANSGARAPPTRSQTNCCLPEGTMNNVYVNMPTNFSVLNCQQATQIVPHQGQYLHPPYVGYTVQHDSVPMTAVPPFMDGLQPGYRQIQSPFPHTNSEQKMYPAVTV</sequence>
<name>SHSA2_HUMAN</name>
<evidence type="ECO:0000250" key="1"/>
<evidence type="ECO:0000255" key="2"/>
<evidence type="ECO:0000256" key="3">
    <source>
        <dbReference type="SAM" id="MobiDB-lite"/>
    </source>
</evidence>
<evidence type="ECO:0000269" key="4">
    <source>
    </source>
</evidence>
<evidence type="ECO:0000305" key="5"/>
<proteinExistence type="evidence at protein level"/>
<protein>
    <recommendedName>
        <fullName>Protein shisa-2 homolog</fullName>
    </recommendedName>
    <alternativeName>
        <fullName>Transmembrane protein 46</fullName>
    </alternativeName>
</protein>